<proteinExistence type="inferred from homology"/>
<evidence type="ECO:0000255" key="1">
    <source>
        <dbReference type="HAMAP-Rule" id="MF_00272"/>
    </source>
</evidence>
<evidence type="ECO:0000255" key="2">
    <source>
        <dbReference type="PROSITE-ProRule" id="PRU01066"/>
    </source>
</evidence>
<dbReference type="EMBL" id="CP000488">
    <property type="protein sequence ID" value="ABL02636.1"/>
    <property type="molecule type" value="Genomic_DNA"/>
</dbReference>
<dbReference type="RefSeq" id="WP_011738261.1">
    <property type="nucleotide sequence ID" value="NC_008610.1"/>
</dbReference>
<dbReference type="SMR" id="A1AXH9"/>
<dbReference type="STRING" id="413404.Rmag_0923"/>
<dbReference type="KEGG" id="rma:Rmag_0923"/>
<dbReference type="eggNOG" id="COG0509">
    <property type="taxonomic scope" value="Bacteria"/>
</dbReference>
<dbReference type="HOGENOM" id="CLU_097408_2_1_6"/>
<dbReference type="OrthoDB" id="9796712at2"/>
<dbReference type="Proteomes" id="UP000002587">
    <property type="component" value="Chromosome"/>
</dbReference>
<dbReference type="GO" id="GO:0005829">
    <property type="term" value="C:cytosol"/>
    <property type="evidence" value="ECO:0007669"/>
    <property type="project" value="TreeGrafter"/>
</dbReference>
<dbReference type="GO" id="GO:0005960">
    <property type="term" value="C:glycine cleavage complex"/>
    <property type="evidence" value="ECO:0007669"/>
    <property type="project" value="InterPro"/>
</dbReference>
<dbReference type="GO" id="GO:0019464">
    <property type="term" value="P:glycine decarboxylation via glycine cleavage system"/>
    <property type="evidence" value="ECO:0007669"/>
    <property type="project" value="UniProtKB-UniRule"/>
</dbReference>
<dbReference type="CDD" id="cd06848">
    <property type="entry name" value="GCS_H"/>
    <property type="match status" value="1"/>
</dbReference>
<dbReference type="Gene3D" id="2.40.50.100">
    <property type="match status" value="1"/>
</dbReference>
<dbReference type="HAMAP" id="MF_00272">
    <property type="entry name" value="GcvH"/>
    <property type="match status" value="1"/>
</dbReference>
<dbReference type="InterPro" id="IPR000089">
    <property type="entry name" value="Biotin_lipoyl"/>
</dbReference>
<dbReference type="InterPro" id="IPR002930">
    <property type="entry name" value="GCV_H"/>
</dbReference>
<dbReference type="InterPro" id="IPR033753">
    <property type="entry name" value="GCV_H/Fam206"/>
</dbReference>
<dbReference type="InterPro" id="IPR017453">
    <property type="entry name" value="GCV_H_sub"/>
</dbReference>
<dbReference type="InterPro" id="IPR011053">
    <property type="entry name" value="Single_hybrid_motif"/>
</dbReference>
<dbReference type="NCBIfam" id="TIGR00527">
    <property type="entry name" value="gcvH"/>
    <property type="match status" value="1"/>
</dbReference>
<dbReference type="NCBIfam" id="NF002270">
    <property type="entry name" value="PRK01202.1"/>
    <property type="match status" value="1"/>
</dbReference>
<dbReference type="PANTHER" id="PTHR11715">
    <property type="entry name" value="GLYCINE CLEAVAGE SYSTEM H PROTEIN"/>
    <property type="match status" value="1"/>
</dbReference>
<dbReference type="PANTHER" id="PTHR11715:SF3">
    <property type="entry name" value="GLYCINE CLEAVAGE SYSTEM H PROTEIN-RELATED"/>
    <property type="match status" value="1"/>
</dbReference>
<dbReference type="Pfam" id="PF01597">
    <property type="entry name" value="GCV_H"/>
    <property type="match status" value="1"/>
</dbReference>
<dbReference type="SUPFAM" id="SSF51230">
    <property type="entry name" value="Single hybrid motif"/>
    <property type="match status" value="1"/>
</dbReference>
<dbReference type="PROSITE" id="PS50968">
    <property type="entry name" value="BIOTINYL_LIPOYL"/>
    <property type="match status" value="1"/>
</dbReference>
<feature type="chain" id="PRO_1000059188" description="Glycine cleavage system H protein">
    <location>
        <begin position="1"/>
        <end position="124"/>
    </location>
</feature>
<feature type="domain" description="Lipoyl-binding" evidence="2">
    <location>
        <begin position="24"/>
        <end position="106"/>
    </location>
</feature>
<feature type="modified residue" description="N6-lipoyllysine" evidence="1">
    <location>
        <position position="65"/>
    </location>
</feature>
<organism>
    <name type="scientific">Ruthia magnifica subsp. Calyptogena magnifica</name>
    <dbReference type="NCBI Taxonomy" id="413404"/>
    <lineage>
        <taxon>Bacteria</taxon>
        <taxon>Pseudomonadati</taxon>
        <taxon>Pseudomonadota</taxon>
        <taxon>Gammaproteobacteria</taxon>
        <taxon>Candidatus Pseudothioglobaceae</taxon>
        <taxon>Candidatus Ruthturnera</taxon>
    </lineage>
</organism>
<accession>A1AXH9</accession>
<gene>
    <name evidence="1" type="primary">gcvH</name>
    <name type="ordered locus">Rmag_0923</name>
</gene>
<sequence length="124" mass="13988">MSEIRDDRQYTQTHEWILDHGDGTYTMGITDHAQALLGDMVFVELPNIDDEVSIEDEFCVVESVKAASGVYAPADLQIIKVNKALDDEPELINYSCYDDGWLVKFKSHSVDDLMNVAVYAQILD</sequence>
<reference key="1">
    <citation type="journal article" date="2007" name="Science">
        <title>The Calyptogena magnifica chemoautotrophic symbiont genome.</title>
        <authorList>
            <person name="Newton I.L.G."/>
            <person name="Woyke T."/>
            <person name="Auchtung T.A."/>
            <person name="Dilly G.F."/>
            <person name="Dutton R.J."/>
            <person name="Fisher M.C."/>
            <person name="Fontanez K.M."/>
            <person name="Lau E."/>
            <person name="Stewart F.J."/>
            <person name="Richardson P.M."/>
            <person name="Barry K.W."/>
            <person name="Saunders E."/>
            <person name="Detter J.C."/>
            <person name="Wu D."/>
            <person name="Eisen J.A."/>
            <person name="Cavanaugh C.M."/>
        </authorList>
    </citation>
    <scope>NUCLEOTIDE SEQUENCE [LARGE SCALE GENOMIC DNA]</scope>
</reference>
<comment type="function">
    <text evidence="1">The glycine cleavage system catalyzes the degradation of glycine. The H protein shuttles the methylamine group of glycine from the P protein to the T protein.</text>
</comment>
<comment type="cofactor">
    <cofactor evidence="1">
        <name>(R)-lipoate</name>
        <dbReference type="ChEBI" id="CHEBI:83088"/>
    </cofactor>
    <text evidence="1">Binds 1 lipoyl cofactor covalently.</text>
</comment>
<comment type="subunit">
    <text evidence="1">The glycine cleavage system is composed of four proteins: P, T, L and H.</text>
</comment>
<comment type="similarity">
    <text evidence="1">Belongs to the GcvH family.</text>
</comment>
<protein>
    <recommendedName>
        <fullName evidence="1">Glycine cleavage system H protein</fullName>
    </recommendedName>
</protein>
<name>GCSH_RUTMC</name>
<keyword id="KW-0450">Lipoyl</keyword>